<keyword id="KW-0067">ATP-binding</keyword>
<keyword id="KW-0131">Cell cycle</keyword>
<keyword id="KW-0132">Cell division</keyword>
<keyword id="KW-0133">Cell shape</keyword>
<keyword id="KW-0961">Cell wall biogenesis/degradation</keyword>
<keyword id="KW-0963">Cytoplasm</keyword>
<keyword id="KW-0436">Ligase</keyword>
<keyword id="KW-0547">Nucleotide-binding</keyword>
<keyword id="KW-0573">Peptidoglycan synthesis</keyword>
<proteinExistence type="inferred from homology"/>
<reference key="1">
    <citation type="submission" date="2008-06" db="EMBL/GenBank/DDBJ databases">
        <title>Complete sequence of Chlorobium phaeobacteroides BS1.</title>
        <authorList>
            <consortium name="US DOE Joint Genome Institute"/>
            <person name="Lucas S."/>
            <person name="Copeland A."/>
            <person name="Lapidus A."/>
            <person name="Glavina del Rio T."/>
            <person name="Dalin E."/>
            <person name="Tice H."/>
            <person name="Bruce D."/>
            <person name="Goodwin L."/>
            <person name="Pitluck S."/>
            <person name="Schmutz J."/>
            <person name="Larimer F."/>
            <person name="Land M."/>
            <person name="Hauser L."/>
            <person name="Kyrpides N."/>
            <person name="Ovchinnikova G."/>
            <person name="Li T."/>
            <person name="Liu Z."/>
            <person name="Zhao F."/>
            <person name="Overmann J."/>
            <person name="Bryant D.A."/>
            <person name="Richardson P."/>
        </authorList>
    </citation>
    <scope>NUCLEOTIDE SEQUENCE [LARGE SCALE GENOMIC DNA]</scope>
    <source>
        <strain>BS1</strain>
    </source>
</reference>
<gene>
    <name evidence="1" type="primary">murC</name>
    <name type="ordered locus">Cphamn1_2521</name>
</gene>
<organism>
    <name type="scientific">Chlorobium phaeobacteroides (strain BS1)</name>
    <dbReference type="NCBI Taxonomy" id="331678"/>
    <lineage>
        <taxon>Bacteria</taxon>
        <taxon>Pseudomonadati</taxon>
        <taxon>Chlorobiota</taxon>
        <taxon>Chlorobiia</taxon>
        <taxon>Chlorobiales</taxon>
        <taxon>Chlorobiaceae</taxon>
        <taxon>Chlorobium/Pelodictyon group</taxon>
        <taxon>Chlorobium</taxon>
    </lineage>
</organism>
<comment type="function">
    <text evidence="1">Cell wall formation.</text>
</comment>
<comment type="catalytic activity">
    <reaction evidence="1">
        <text>UDP-N-acetyl-alpha-D-muramate + L-alanine + ATP = UDP-N-acetyl-alpha-D-muramoyl-L-alanine + ADP + phosphate + H(+)</text>
        <dbReference type="Rhea" id="RHEA:23372"/>
        <dbReference type="ChEBI" id="CHEBI:15378"/>
        <dbReference type="ChEBI" id="CHEBI:30616"/>
        <dbReference type="ChEBI" id="CHEBI:43474"/>
        <dbReference type="ChEBI" id="CHEBI:57972"/>
        <dbReference type="ChEBI" id="CHEBI:70757"/>
        <dbReference type="ChEBI" id="CHEBI:83898"/>
        <dbReference type="ChEBI" id="CHEBI:456216"/>
        <dbReference type="EC" id="6.3.2.8"/>
    </reaction>
</comment>
<comment type="pathway">
    <text evidence="1">Cell wall biogenesis; peptidoglycan biosynthesis.</text>
</comment>
<comment type="subcellular location">
    <subcellularLocation>
        <location evidence="1">Cytoplasm</location>
    </subcellularLocation>
</comment>
<comment type="similarity">
    <text evidence="1">Belongs to the MurCDEF family.</text>
</comment>
<sequence>MELGNTRCVHIVGIGGAGMSAIAELLLKSGFTVTGSDLVASEVTGKLQDQGAAVALGHSAENIGACDVVVYSSAVAASENEEVAAALQKGIPVIKRDEMLGELMRYKSGICVAGTHGKTTTTAMIATMLIGAGESPTVMIGGISDDLKGSTMVGSGKYMVIEADEYDRAFLKLTPSLAVINSLEMEHTDTYADIEALRDAFVAFANKVPFYGRVFCCVDWPEVRKIIPRMNRRLFTYGIEESADLMARDIQIVGHETRFTVDYQKQEMARVSIAAPGRHNVHNALAAIATGLEMGLPVDSIVSGLASFSGMRRRFQILYGRAGGPVIVDDYAHHPSEVKAAVKAARAGWPEHEVIAVFQPHLFSRTTAFADEYGWALSNADRVCVADVFAAREKTADYPGVSGELVAEAALMAGAQQVSFIPDREELCTTLQGYCVPGNLLLCMGAGDITKMASELADHCRKNEP</sequence>
<protein>
    <recommendedName>
        <fullName evidence="1">UDP-N-acetylmuramate--L-alanine ligase</fullName>
        <ecNumber evidence="1">6.3.2.8</ecNumber>
    </recommendedName>
    <alternativeName>
        <fullName evidence="1">UDP-N-acetylmuramoyl-L-alanine synthetase</fullName>
    </alternativeName>
</protein>
<name>MURC_CHLPB</name>
<dbReference type="EC" id="6.3.2.8" evidence="1"/>
<dbReference type="EMBL" id="CP001101">
    <property type="protein sequence ID" value="ACE05415.1"/>
    <property type="molecule type" value="Genomic_DNA"/>
</dbReference>
<dbReference type="SMR" id="B3EQB7"/>
<dbReference type="STRING" id="331678.Cphamn1_2521"/>
<dbReference type="KEGG" id="cpb:Cphamn1_2521"/>
<dbReference type="eggNOG" id="COG0773">
    <property type="taxonomic scope" value="Bacteria"/>
</dbReference>
<dbReference type="HOGENOM" id="CLU_028104_2_2_10"/>
<dbReference type="OrthoDB" id="9804126at2"/>
<dbReference type="UniPathway" id="UPA00219"/>
<dbReference type="GO" id="GO:0005737">
    <property type="term" value="C:cytoplasm"/>
    <property type="evidence" value="ECO:0007669"/>
    <property type="project" value="UniProtKB-SubCell"/>
</dbReference>
<dbReference type="GO" id="GO:0005524">
    <property type="term" value="F:ATP binding"/>
    <property type="evidence" value="ECO:0007669"/>
    <property type="project" value="UniProtKB-UniRule"/>
</dbReference>
<dbReference type="GO" id="GO:0008763">
    <property type="term" value="F:UDP-N-acetylmuramate-L-alanine ligase activity"/>
    <property type="evidence" value="ECO:0007669"/>
    <property type="project" value="UniProtKB-UniRule"/>
</dbReference>
<dbReference type="GO" id="GO:0051301">
    <property type="term" value="P:cell division"/>
    <property type="evidence" value="ECO:0007669"/>
    <property type="project" value="UniProtKB-KW"/>
</dbReference>
<dbReference type="GO" id="GO:0071555">
    <property type="term" value="P:cell wall organization"/>
    <property type="evidence" value="ECO:0007669"/>
    <property type="project" value="UniProtKB-KW"/>
</dbReference>
<dbReference type="GO" id="GO:0009252">
    <property type="term" value="P:peptidoglycan biosynthetic process"/>
    <property type="evidence" value="ECO:0007669"/>
    <property type="project" value="UniProtKB-UniRule"/>
</dbReference>
<dbReference type="GO" id="GO:0008360">
    <property type="term" value="P:regulation of cell shape"/>
    <property type="evidence" value="ECO:0007669"/>
    <property type="project" value="UniProtKB-KW"/>
</dbReference>
<dbReference type="Gene3D" id="3.90.190.20">
    <property type="entry name" value="Mur ligase, C-terminal domain"/>
    <property type="match status" value="1"/>
</dbReference>
<dbReference type="Gene3D" id="3.40.1190.10">
    <property type="entry name" value="Mur-like, catalytic domain"/>
    <property type="match status" value="1"/>
</dbReference>
<dbReference type="Gene3D" id="3.40.50.720">
    <property type="entry name" value="NAD(P)-binding Rossmann-like Domain"/>
    <property type="match status" value="1"/>
</dbReference>
<dbReference type="HAMAP" id="MF_00046">
    <property type="entry name" value="MurC"/>
    <property type="match status" value="1"/>
</dbReference>
<dbReference type="InterPro" id="IPR036565">
    <property type="entry name" value="Mur-like_cat_sf"/>
</dbReference>
<dbReference type="InterPro" id="IPR004101">
    <property type="entry name" value="Mur_ligase_C"/>
</dbReference>
<dbReference type="InterPro" id="IPR036615">
    <property type="entry name" value="Mur_ligase_C_dom_sf"/>
</dbReference>
<dbReference type="InterPro" id="IPR013221">
    <property type="entry name" value="Mur_ligase_cen"/>
</dbReference>
<dbReference type="InterPro" id="IPR000713">
    <property type="entry name" value="Mur_ligase_N"/>
</dbReference>
<dbReference type="InterPro" id="IPR050061">
    <property type="entry name" value="MurCDEF_pg_biosynth"/>
</dbReference>
<dbReference type="InterPro" id="IPR005758">
    <property type="entry name" value="UDP-N-AcMur_Ala_ligase_MurC"/>
</dbReference>
<dbReference type="NCBIfam" id="TIGR01082">
    <property type="entry name" value="murC"/>
    <property type="match status" value="1"/>
</dbReference>
<dbReference type="PANTHER" id="PTHR43445:SF3">
    <property type="entry name" value="UDP-N-ACETYLMURAMATE--L-ALANINE LIGASE"/>
    <property type="match status" value="1"/>
</dbReference>
<dbReference type="PANTHER" id="PTHR43445">
    <property type="entry name" value="UDP-N-ACETYLMURAMATE--L-ALANINE LIGASE-RELATED"/>
    <property type="match status" value="1"/>
</dbReference>
<dbReference type="Pfam" id="PF01225">
    <property type="entry name" value="Mur_ligase"/>
    <property type="match status" value="1"/>
</dbReference>
<dbReference type="Pfam" id="PF02875">
    <property type="entry name" value="Mur_ligase_C"/>
    <property type="match status" value="1"/>
</dbReference>
<dbReference type="Pfam" id="PF08245">
    <property type="entry name" value="Mur_ligase_M"/>
    <property type="match status" value="1"/>
</dbReference>
<dbReference type="SUPFAM" id="SSF51984">
    <property type="entry name" value="MurCD N-terminal domain"/>
    <property type="match status" value="1"/>
</dbReference>
<dbReference type="SUPFAM" id="SSF53623">
    <property type="entry name" value="MurD-like peptide ligases, catalytic domain"/>
    <property type="match status" value="1"/>
</dbReference>
<dbReference type="SUPFAM" id="SSF53244">
    <property type="entry name" value="MurD-like peptide ligases, peptide-binding domain"/>
    <property type="match status" value="1"/>
</dbReference>
<accession>B3EQB7</accession>
<evidence type="ECO:0000255" key="1">
    <source>
        <dbReference type="HAMAP-Rule" id="MF_00046"/>
    </source>
</evidence>
<feature type="chain" id="PRO_1000116619" description="UDP-N-acetylmuramate--L-alanine ligase">
    <location>
        <begin position="1"/>
        <end position="465"/>
    </location>
</feature>
<feature type="binding site" evidence="1">
    <location>
        <begin position="114"/>
        <end position="120"/>
    </location>
    <ligand>
        <name>ATP</name>
        <dbReference type="ChEBI" id="CHEBI:30616"/>
    </ligand>
</feature>